<feature type="signal peptide" evidence="1">
    <location>
        <begin position="1"/>
        <end position="23"/>
    </location>
</feature>
<feature type="chain" id="PRO_0000031838" description="Spermidine/putrescine-binding periplasmic protein">
    <location>
        <begin position="24"/>
        <end position="348"/>
    </location>
</feature>
<accession>P0A2C8</accession>
<accession>P97012</accession>
<evidence type="ECO:0000250" key="1"/>
<evidence type="ECO:0000305" key="2"/>
<organism>
    <name type="scientific">Salmonella typhi</name>
    <dbReference type="NCBI Taxonomy" id="90370"/>
    <lineage>
        <taxon>Bacteria</taxon>
        <taxon>Pseudomonadati</taxon>
        <taxon>Pseudomonadota</taxon>
        <taxon>Gammaproteobacteria</taxon>
        <taxon>Enterobacterales</taxon>
        <taxon>Enterobacteriaceae</taxon>
        <taxon>Salmonella</taxon>
    </lineage>
</organism>
<protein>
    <recommendedName>
        <fullName>Spermidine/putrescine-binding periplasmic protein</fullName>
        <shortName>SPBP</shortName>
    </recommendedName>
</protein>
<dbReference type="EMBL" id="AL513382">
    <property type="protein sequence ID" value="CAD08346.1"/>
    <property type="molecule type" value="Genomic_DNA"/>
</dbReference>
<dbReference type="EMBL" id="AE014613">
    <property type="protein sequence ID" value="AAO69323.1"/>
    <property type="molecule type" value="Genomic_DNA"/>
</dbReference>
<dbReference type="RefSeq" id="NP_455714.1">
    <property type="nucleotide sequence ID" value="NC_003198.1"/>
</dbReference>
<dbReference type="RefSeq" id="WP_000759329.1">
    <property type="nucleotide sequence ID" value="NZ_WSUR01000030.1"/>
</dbReference>
<dbReference type="SMR" id="P0A2C8"/>
<dbReference type="STRING" id="220341.gene:17585226"/>
<dbReference type="KEGG" id="stt:t1698"/>
<dbReference type="KEGG" id="sty:STY1262"/>
<dbReference type="PATRIC" id="fig|220341.7.peg.1266"/>
<dbReference type="eggNOG" id="COG0687">
    <property type="taxonomic scope" value="Bacteria"/>
</dbReference>
<dbReference type="HOGENOM" id="CLU_026974_1_3_6"/>
<dbReference type="OMA" id="FWMDNYA"/>
<dbReference type="OrthoDB" id="9769319at2"/>
<dbReference type="Proteomes" id="UP000000541">
    <property type="component" value="Chromosome"/>
</dbReference>
<dbReference type="Proteomes" id="UP000002670">
    <property type="component" value="Chromosome"/>
</dbReference>
<dbReference type="GO" id="GO:0030288">
    <property type="term" value="C:outer membrane-bounded periplasmic space"/>
    <property type="evidence" value="ECO:0007669"/>
    <property type="project" value="UniProtKB-ARBA"/>
</dbReference>
<dbReference type="GO" id="GO:0019808">
    <property type="term" value="F:polyamine binding"/>
    <property type="evidence" value="ECO:0007669"/>
    <property type="project" value="InterPro"/>
</dbReference>
<dbReference type="GO" id="GO:0015846">
    <property type="term" value="P:polyamine transport"/>
    <property type="evidence" value="ECO:0007669"/>
    <property type="project" value="InterPro"/>
</dbReference>
<dbReference type="CDD" id="cd13660">
    <property type="entry name" value="PBP2_PotD"/>
    <property type="match status" value="1"/>
</dbReference>
<dbReference type="FunFam" id="3.40.190.10:FF:000062">
    <property type="entry name" value="Putrescine-binding periplasmic protein"/>
    <property type="match status" value="1"/>
</dbReference>
<dbReference type="Gene3D" id="3.40.190.10">
    <property type="entry name" value="Periplasmic binding protein-like II"/>
    <property type="match status" value="2"/>
</dbReference>
<dbReference type="InterPro" id="IPR006059">
    <property type="entry name" value="SBP"/>
</dbReference>
<dbReference type="InterPro" id="IPR001188">
    <property type="entry name" value="Sperm_putr-bd"/>
</dbReference>
<dbReference type="NCBIfam" id="NF007048">
    <property type="entry name" value="PRK09501.1"/>
    <property type="match status" value="1"/>
</dbReference>
<dbReference type="PANTHER" id="PTHR30222">
    <property type="entry name" value="SPERMIDINE/PUTRESCINE-BINDING PERIPLASMIC PROTEIN"/>
    <property type="match status" value="1"/>
</dbReference>
<dbReference type="PANTHER" id="PTHR30222:SF17">
    <property type="entry name" value="SPERMIDINE_PUTRESCINE-BINDING PERIPLASMIC PROTEIN"/>
    <property type="match status" value="1"/>
</dbReference>
<dbReference type="Pfam" id="PF13416">
    <property type="entry name" value="SBP_bac_8"/>
    <property type="match status" value="1"/>
</dbReference>
<dbReference type="PIRSF" id="PIRSF019574">
    <property type="entry name" value="Periplasmic_polyamine_BP"/>
    <property type="match status" value="1"/>
</dbReference>
<dbReference type="PRINTS" id="PR00909">
    <property type="entry name" value="SPERMDNBNDNG"/>
</dbReference>
<dbReference type="SUPFAM" id="SSF53850">
    <property type="entry name" value="Periplasmic binding protein-like II"/>
    <property type="match status" value="1"/>
</dbReference>
<keyword id="KW-0574">Periplasm</keyword>
<keyword id="KW-0732">Signal</keyword>
<keyword id="KW-0813">Transport</keyword>
<sequence>MKKWSRHLLAAGALALGMSAAHASDNDTLYFYNWTEYVPPGLLEQFTKETGIKVIYSTYESNETMYAKLKTYKDGAYDLVVPSTYYVDKMRKEGMIQKIDKSKLTNFHNLDPEMLNKPFDPNNDYSVPYIWGATAIGVNSDAIDPKTITSWADLWKPEYKNSLLLTDDAREVFQMALRKLGYSGNTTDPKEIEAAYEELKKLMPNVAAFNSDNPANPYMEGEVNLGMVWNGSAFVARQAGTPLEVVWPKEGGIFWMDSLAIPANAKNKEGALKLINFLLRPDVAKEVAETIGYPTPNLAARKLLSPEVANDKSLYPDAQTISKGEWQNDVGDASAIYEEYYQKLKAGR</sequence>
<proteinExistence type="inferred from homology"/>
<name>POTD_SALTI</name>
<gene>
    <name type="primary">potD</name>
    <name type="ordered locus">STY1262</name>
    <name type="ordered locus">t1698</name>
</gene>
<reference key="1">
    <citation type="journal article" date="2001" name="Nature">
        <title>Complete genome sequence of a multiple drug resistant Salmonella enterica serovar Typhi CT18.</title>
        <authorList>
            <person name="Parkhill J."/>
            <person name="Dougan G."/>
            <person name="James K.D."/>
            <person name="Thomson N.R."/>
            <person name="Pickard D."/>
            <person name="Wain J."/>
            <person name="Churcher C.M."/>
            <person name="Mungall K.L."/>
            <person name="Bentley S.D."/>
            <person name="Holden M.T.G."/>
            <person name="Sebaihia M."/>
            <person name="Baker S."/>
            <person name="Basham D."/>
            <person name="Brooks K."/>
            <person name="Chillingworth T."/>
            <person name="Connerton P."/>
            <person name="Cronin A."/>
            <person name="Davis P."/>
            <person name="Davies R.M."/>
            <person name="Dowd L."/>
            <person name="White N."/>
            <person name="Farrar J."/>
            <person name="Feltwell T."/>
            <person name="Hamlin N."/>
            <person name="Haque A."/>
            <person name="Hien T.T."/>
            <person name="Holroyd S."/>
            <person name="Jagels K."/>
            <person name="Krogh A."/>
            <person name="Larsen T.S."/>
            <person name="Leather S."/>
            <person name="Moule S."/>
            <person name="O'Gaora P."/>
            <person name="Parry C."/>
            <person name="Quail M.A."/>
            <person name="Rutherford K.M."/>
            <person name="Simmonds M."/>
            <person name="Skelton J."/>
            <person name="Stevens K."/>
            <person name="Whitehead S."/>
            <person name="Barrell B.G."/>
        </authorList>
    </citation>
    <scope>NUCLEOTIDE SEQUENCE [LARGE SCALE GENOMIC DNA]</scope>
    <source>
        <strain>CT18</strain>
    </source>
</reference>
<reference key="2">
    <citation type="journal article" date="2003" name="J. Bacteriol.">
        <title>Comparative genomics of Salmonella enterica serovar Typhi strains Ty2 and CT18.</title>
        <authorList>
            <person name="Deng W."/>
            <person name="Liou S.-R."/>
            <person name="Plunkett G. III"/>
            <person name="Mayhew G.F."/>
            <person name="Rose D.J."/>
            <person name="Burland V."/>
            <person name="Kodoyianni V."/>
            <person name="Schwartz D.C."/>
            <person name="Blattner F.R."/>
        </authorList>
    </citation>
    <scope>NUCLEOTIDE SEQUENCE [LARGE SCALE GENOMIC DNA]</scope>
    <source>
        <strain>ATCC 700931 / Ty2</strain>
    </source>
</reference>
<comment type="function">
    <text evidence="1">Required for the activity of the bacterial periplasmic transport system of putrescine and spermidine. Polyamine binding protein (By similarity).</text>
</comment>
<comment type="subcellular location">
    <subcellularLocation>
        <location evidence="1">Periplasm</location>
    </subcellularLocation>
</comment>
<comment type="similarity">
    <text evidence="2">Belongs to the bacterial solute-binding protein PotD/PotF family.</text>
</comment>